<organism>
    <name type="scientific">Escherichia coli (strain K12)</name>
    <dbReference type="NCBI Taxonomy" id="83333"/>
    <lineage>
        <taxon>Bacteria</taxon>
        <taxon>Pseudomonadati</taxon>
        <taxon>Pseudomonadota</taxon>
        <taxon>Gammaproteobacteria</taxon>
        <taxon>Enterobacterales</taxon>
        <taxon>Enterobacteriaceae</taxon>
        <taxon>Escherichia</taxon>
    </lineage>
</organism>
<accession>P25894</accession>
<accession>P76646</accession>
<accession>Q2M9Q7</accession>
<dbReference type="EC" id="3.4.24.-"/>
<dbReference type="EMBL" id="M32363">
    <property type="protein sequence ID" value="AAA83911.1"/>
    <property type="status" value="ALT_INIT"/>
    <property type="molecule type" value="Genomic_DNA"/>
</dbReference>
<dbReference type="EMBL" id="U28377">
    <property type="protein sequence ID" value="AAA69103.1"/>
    <property type="status" value="ALT_INIT"/>
    <property type="molecule type" value="Genomic_DNA"/>
</dbReference>
<dbReference type="EMBL" id="U00096">
    <property type="protein sequence ID" value="AAC75973.2"/>
    <property type="molecule type" value="Genomic_DNA"/>
</dbReference>
<dbReference type="EMBL" id="AP009048">
    <property type="protein sequence ID" value="BAE76999.1"/>
    <property type="molecule type" value="Genomic_DNA"/>
</dbReference>
<dbReference type="PIR" id="G65078">
    <property type="entry name" value="G65078"/>
</dbReference>
<dbReference type="RefSeq" id="NP_417411.2">
    <property type="nucleotide sequence ID" value="NC_000913.3"/>
</dbReference>
<dbReference type="RefSeq" id="WP_001326497.1">
    <property type="nucleotide sequence ID" value="NZ_LN832404.1"/>
</dbReference>
<dbReference type="SMR" id="P25894"/>
<dbReference type="BioGRID" id="4263066">
    <property type="interactions" value="16"/>
</dbReference>
<dbReference type="DIP" id="DIP-12186N"/>
<dbReference type="FunCoup" id="P25894">
    <property type="interactions" value="187"/>
</dbReference>
<dbReference type="IntAct" id="P25894">
    <property type="interactions" value="3"/>
</dbReference>
<dbReference type="STRING" id="511145.b2936"/>
<dbReference type="MEROPS" id="M48.022"/>
<dbReference type="jPOST" id="P25894"/>
<dbReference type="PaxDb" id="511145-b2936"/>
<dbReference type="EnsemblBacteria" id="AAC75973">
    <property type="protein sequence ID" value="AAC75973"/>
    <property type="gene ID" value="b2936"/>
</dbReference>
<dbReference type="GeneID" id="945173"/>
<dbReference type="KEGG" id="ecj:JW2903"/>
<dbReference type="KEGG" id="eco:b2936"/>
<dbReference type="KEGG" id="ecoc:C3026_16075"/>
<dbReference type="PATRIC" id="fig|1411691.4.peg.3797"/>
<dbReference type="EchoBASE" id="EB1268"/>
<dbReference type="eggNOG" id="COG0501">
    <property type="taxonomic scope" value="Bacteria"/>
</dbReference>
<dbReference type="HOGENOM" id="CLU_074068_0_0_6"/>
<dbReference type="InParanoid" id="P25894"/>
<dbReference type="OMA" id="SGAQAYQ"/>
<dbReference type="OrthoDB" id="9810445at2"/>
<dbReference type="PhylomeDB" id="P25894"/>
<dbReference type="BioCyc" id="EcoCyc:EG11291-MONOMER"/>
<dbReference type="BioCyc" id="MetaCyc:EG11291-MONOMER"/>
<dbReference type="PRO" id="PR:P25894"/>
<dbReference type="Proteomes" id="UP000000625">
    <property type="component" value="Chromosome"/>
</dbReference>
<dbReference type="GO" id="GO:0009279">
    <property type="term" value="C:cell outer membrane"/>
    <property type="evidence" value="ECO:0000314"/>
    <property type="project" value="EcoCyc"/>
</dbReference>
<dbReference type="GO" id="GO:0016020">
    <property type="term" value="C:membrane"/>
    <property type="evidence" value="ECO:0000318"/>
    <property type="project" value="GO_Central"/>
</dbReference>
<dbReference type="GO" id="GO:0046872">
    <property type="term" value="F:metal ion binding"/>
    <property type="evidence" value="ECO:0007669"/>
    <property type="project" value="UniProtKB-KW"/>
</dbReference>
<dbReference type="GO" id="GO:0004222">
    <property type="term" value="F:metalloendopeptidase activity"/>
    <property type="evidence" value="ECO:0000318"/>
    <property type="project" value="GO_Central"/>
</dbReference>
<dbReference type="GO" id="GO:0008237">
    <property type="term" value="F:metallopeptidase activity"/>
    <property type="evidence" value="ECO:0000314"/>
    <property type="project" value="EcoCyc"/>
</dbReference>
<dbReference type="GO" id="GO:0071476">
    <property type="term" value="P:cellular hypotonic response"/>
    <property type="evidence" value="ECO:0000270"/>
    <property type="project" value="EcoCyc"/>
</dbReference>
<dbReference type="GO" id="GO:0034605">
    <property type="term" value="P:cellular response to heat"/>
    <property type="evidence" value="ECO:0000270"/>
    <property type="project" value="EcoCyc"/>
</dbReference>
<dbReference type="GO" id="GO:0034644">
    <property type="term" value="P:cellular response to UV"/>
    <property type="evidence" value="ECO:0000270"/>
    <property type="project" value="EcoCyc"/>
</dbReference>
<dbReference type="GO" id="GO:0051603">
    <property type="term" value="P:proteolysis involved in protein catabolic process"/>
    <property type="evidence" value="ECO:0000318"/>
    <property type="project" value="GO_Central"/>
</dbReference>
<dbReference type="CDD" id="cd07334">
    <property type="entry name" value="M48C_loiP_like"/>
    <property type="match status" value="1"/>
</dbReference>
<dbReference type="FunFam" id="3.30.2010.10:FF:000004">
    <property type="entry name" value="Metalloprotease YcaL"/>
    <property type="match status" value="1"/>
</dbReference>
<dbReference type="Gene3D" id="3.30.2010.10">
    <property type="entry name" value="Metalloproteases ('zincins'), catalytic domain"/>
    <property type="match status" value="1"/>
</dbReference>
<dbReference type="InterPro" id="IPR051156">
    <property type="entry name" value="Mito/Outer_Membr_Metalloprot"/>
</dbReference>
<dbReference type="InterPro" id="IPR001915">
    <property type="entry name" value="Peptidase_M48"/>
</dbReference>
<dbReference type="PANTHER" id="PTHR22726">
    <property type="entry name" value="METALLOENDOPEPTIDASE OMA1"/>
    <property type="match status" value="1"/>
</dbReference>
<dbReference type="PANTHER" id="PTHR22726:SF4">
    <property type="entry name" value="METALLOPROTEASE LOIP"/>
    <property type="match status" value="1"/>
</dbReference>
<dbReference type="Pfam" id="PF01435">
    <property type="entry name" value="Peptidase_M48"/>
    <property type="match status" value="1"/>
</dbReference>
<dbReference type="PROSITE" id="PS51257">
    <property type="entry name" value="PROKAR_LIPOPROTEIN"/>
    <property type="match status" value="1"/>
</dbReference>
<comment type="function">
    <text evidence="5 6 7 8">Metalloprotease that cleaves substrates preferentially between Phe-Phe residues. Plays a role in response to some stress conditions. Seems to regulate the expression of speB.</text>
</comment>
<comment type="cofactor">
    <cofactor evidence="9">
        <name>Zn(2+)</name>
        <dbReference type="ChEBI" id="CHEBI:29105"/>
    </cofactor>
    <text evidence="9">Binds 1 zinc ion per subunit.</text>
</comment>
<comment type="subunit">
    <text evidence="6 8">Interacts with Era and BepA.</text>
</comment>
<comment type="interaction">
    <interactant intactId="EBI-560654">
        <id>P25894</id>
    </interactant>
    <interactant intactId="EBI-560638">
        <id>P0A6D5</id>
        <label>ydiB</label>
    </interactant>
    <organismsDiffer>false</organismsDiffer>
    <experiments>2</experiments>
</comment>
<comment type="subcellular location">
    <subcellularLocation>
        <location evidence="7 8">Cell outer membrane</location>
        <topology evidence="3 7 8">Lipid-anchor</topology>
    </subcellularLocation>
    <text>Proper membrane localization can depend on BepA.</text>
</comment>
<comment type="induction">
    <text evidence="6 7 8">Induced by heat shock and low osmolarity.</text>
</comment>
<comment type="PTM">
    <text evidence="8">The intramolecular disulfide bond improves the stability and the activity of LoiP. It forms even in the absence of the oxido-reductase DsbA (PubMed:22491786).</text>
</comment>
<comment type="similarity">
    <text evidence="9">Belongs to the peptidase M48B family.</text>
</comment>
<comment type="sequence caution" evidence="9">
    <conflict type="erroneous initiation">
        <sequence resource="EMBL-CDS" id="AAA69103"/>
    </conflict>
    <text>Extended N-terminus.</text>
</comment>
<comment type="sequence caution" evidence="9">
    <conflict type="erroneous initiation">
        <sequence resource="EMBL-CDS" id="AAA83911"/>
    </conflict>
    <text>Extended N-terminus.</text>
</comment>
<evidence type="ECO:0000250" key="1"/>
<evidence type="ECO:0000255" key="2"/>
<evidence type="ECO:0000255" key="3">
    <source>
        <dbReference type="PROSITE-ProRule" id="PRU00303"/>
    </source>
</evidence>
<evidence type="ECO:0000256" key="4">
    <source>
        <dbReference type="SAM" id="MobiDB-lite"/>
    </source>
</evidence>
<evidence type="ECO:0000269" key="5">
    <source>
    </source>
</evidence>
<evidence type="ECO:0000269" key="6">
    <source>
    </source>
</evidence>
<evidence type="ECO:0000269" key="7">
    <source>
    </source>
</evidence>
<evidence type="ECO:0000269" key="8">
    <source>
    </source>
</evidence>
<evidence type="ECO:0000305" key="9"/>
<proteinExistence type="evidence at protein level"/>
<gene>
    <name type="primary">loiP</name>
    <name type="synonym">yggG</name>
    <name type="ordered locus">b2936</name>
    <name type="ordered locus">JW2903</name>
</gene>
<sequence>MKIRALLVAMSVATVLTGCQNMDSNGLLSSGAEAFQAYSLSDAQVKTLSDQACQEMDSKATIAPANSEYAKRLTTIANALGNNINGQPVNYKVYMAKDVNAFAMANGCIRVYSGLMDMMTDNEVEAVIGHEMGHVALGHVKKGMQVALGTNAVRVAAASAGGIVGSLSQSQLGNLGEKLVNSQFSQRQEAEADDYSYDLLRQRGISPAGLATSFEKLAKLEEGRQSSMFDDHPASAERAQHIRDRMSADGIK</sequence>
<feature type="signal peptide" evidence="3">
    <location>
        <begin position="1"/>
        <end position="18"/>
    </location>
</feature>
<feature type="chain" id="PRO_0000138938" description="Metalloprotease LoiP">
    <location>
        <begin position="19"/>
        <end position="252"/>
    </location>
</feature>
<feature type="region of interest" description="Disordered" evidence="4">
    <location>
        <begin position="224"/>
        <end position="252"/>
    </location>
</feature>
<feature type="active site" evidence="2">
    <location>
        <position position="131"/>
    </location>
</feature>
<feature type="binding site" evidence="2">
    <location>
        <position position="130"/>
    </location>
    <ligand>
        <name>Zn(2+)</name>
        <dbReference type="ChEBI" id="CHEBI:29105"/>
        <note>catalytic</note>
    </ligand>
</feature>
<feature type="binding site" evidence="2">
    <location>
        <position position="134"/>
    </location>
    <ligand>
        <name>Zn(2+)</name>
        <dbReference type="ChEBI" id="CHEBI:29105"/>
        <note>catalytic</note>
    </ligand>
</feature>
<feature type="binding site" evidence="1">
    <location>
        <position position="189"/>
    </location>
    <ligand>
        <name>Zn(2+)</name>
        <dbReference type="ChEBI" id="CHEBI:29105"/>
        <note>catalytic</note>
    </ligand>
</feature>
<feature type="lipid moiety-binding region" description="N-palmitoyl cysteine" evidence="3">
    <location>
        <position position="19"/>
    </location>
</feature>
<feature type="lipid moiety-binding region" description="S-diacylglycerol cysteine" evidence="3">
    <location>
        <position position="19"/>
    </location>
</feature>
<feature type="disulfide bond" evidence="8">
    <location>
        <begin position="53"/>
        <end position="108"/>
    </location>
</feature>
<reference key="1">
    <citation type="journal article" date="1990" name="J. Bacteriol.">
        <title>Analysis and sequence of the speB gene encoding agmatine ureohydrolase, a putrescine biosynthetic enzyme in Escherichia coli.</title>
        <authorList>
            <person name="Szumanski M.B.W."/>
            <person name="Boyle S.M."/>
        </authorList>
    </citation>
    <scope>NUCLEOTIDE SEQUENCE [GENOMIC DNA]</scope>
</reference>
<reference key="2">
    <citation type="journal article" date="1997" name="Science">
        <title>The complete genome sequence of Escherichia coli K-12.</title>
        <authorList>
            <person name="Blattner F.R."/>
            <person name="Plunkett G. III"/>
            <person name="Bloch C.A."/>
            <person name="Perna N.T."/>
            <person name="Burland V."/>
            <person name="Riley M."/>
            <person name="Collado-Vides J."/>
            <person name="Glasner J.D."/>
            <person name="Rode C.K."/>
            <person name="Mayhew G.F."/>
            <person name="Gregor J."/>
            <person name="Davis N.W."/>
            <person name="Kirkpatrick H.A."/>
            <person name="Goeden M.A."/>
            <person name="Rose D.J."/>
            <person name="Mau B."/>
            <person name="Shao Y."/>
        </authorList>
    </citation>
    <scope>NUCLEOTIDE SEQUENCE [LARGE SCALE GENOMIC DNA]</scope>
    <source>
        <strain>K12 / MG1655 / ATCC 47076</strain>
    </source>
</reference>
<reference key="3">
    <citation type="journal article" date="2006" name="Mol. Syst. Biol.">
        <title>Highly accurate genome sequences of Escherichia coli K-12 strains MG1655 and W3110.</title>
        <authorList>
            <person name="Hayashi K."/>
            <person name="Morooka N."/>
            <person name="Yamamoto Y."/>
            <person name="Fujita K."/>
            <person name="Isono K."/>
            <person name="Choi S."/>
            <person name="Ohtsubo E."/>
            <person name="Baba T."/>
            <person name="Wanner B.L."/>
            <person name="Mori H."/>
            <person name="Horiuchi T."/>
        </authorList>
    </citation>
    <scope>NUCLEOTIDE SEQUENCE [LARGE SCALE GENOMIC DNA]</scope>
    <source>
        <strain>K12 / W3110 / ATCC 27325 / DSM 5911</strain>
    </source>
</reference>
<reference key="4">
    <citation type="journal article" date="1992" name="J. Bacteriol.">
        <title>Influence of cyclic AMP, agmatine, and a novel protein encoded by a flanking gene on speB (agmatine ureohydrolase) in Escherichia coli.</title>
        <authorList>
            <person name="Szumanski M.B.W."/>
            <person name="Boyle S.M."/>
        </authorList>
    </citation>
    <scope>FUNCTION</scope>
</reference>
<reference key="5">
    <citation type="journal article" date="2007" name="FEMS Microbiol. Lett.">
        <title>Up-regulation of yggG promotes the survival of Escherichia coli cells containing Era-1 mutant protein.</title>
        <authorList>
            <person name="Huang Y."/>
            <person name="Zhang B."/>
            <person name="Dong K."/>
            <person name="Zhang X."/>
            <person name="Hou L."/>
            <person name="Wang T."/>
            <person name="Chen N."/>
            <person name="Chen S."/>
        </authorList>
    </citation>
    <scope>FUNCTION</scope>
    <scope>INTERACTION WITH ERA</scope>
    <scope>INDUCTION</scope>
    <source>
        <strain>K12 / W3110 / ATCC 27325 / DSM 5911</strain>
    </source>
</reference>
<reference key="6">
    <citation type="journal article" date="2008" name="Curr. Microbiol.">
        <title>Expression and regulation of the yggG gene of Escherichia coli.</title>
        <authorList>
            <person name="Huang Y."/>
            <person name="Dong K."/>
            <person name="Zhang X."/>
            <person name="Zhang B."/>
            <person name="Hou L."/>
            <person name="Chen N."/>
            <person name="Chen S."/>
        </authorList>
    </citation>
    <scope>FUNCTION</scope>
    <scope>SUBCELLULAR LOCATION</scope>
    <scope>INDUCTION</scope>
    <source>
        <strain>K12 / W3110 / ATCC 27325 / DSM 5911</strain>
    </source>
</reference>
<reference key="7">
    <citation type="journal article" date="2012" name="Mol. Biosyst.">
        <title>E. coli LoiP (YggG), a metalloprotease hydrolyzing Phe-Phe bonds.</title>
        <authorList>
            <person name="Lutticke C."/>
            <person name="Hauske P."/>
            <person name="Lewandrowski U."/>
            <person name="Sickmann A."/>
            <person name="Kaiser M."/>
            <person name="Ehrmann M."/>
        </authorList>
    </citation>
    <scope>FUNCTION AS A PROTEASE</scope>
    <scope>INTERACTION WITH BEPA</scope>
    <scope>SUBCELLULAR LOCATION</scope>
    <scope>INDUCTION</scope>
    <scope>DISULFIDE BOND</scope>
    <scope>GENE NAME</scope>
</reference>
<protein>
    <recommendedName>
        <fullName>Metalloprotease LoiP</fullName>
        <ecNumber>3.4.24.-</ecNumber>
    </recommendedName>
</protein>
<name>LOIP_ECOLI</name>
<keyword id="KW-0998">Cell outer membrane</keyword>
<keyword id="KW-1015">Disulfide bond</keyword>
<keyword id="KW-0378">Hydrolase</keyword>
<keyword id="KW-0449">Lipoprotein</keyword>
<keyword id="KW-0472">Membrane</keyword>
<keyword id="KW-0479">Metal-binding</keyword>
<keyword id="KW-0482">Metalloprotease</keyword>
<keyword id="KW-0564">Palmitate</keyword>
<keyword id="KW-0645">Protease</keyword>
<keyword id="KW-1185">Reference proteome</keyword>
<keyword id="KW-0732">Signal</keyword>
<keyword id="KW-0346">Stress response</keyword>
<keyword id="KW-0862">Zinc</keyword>